<evidence type="ECO:0000255" key="1">
    <source>
        <dbReference type="HAMAP-Rule" id="MF_00530"/>
    </source>
</evidence>
<gene>
    <name evidence="1" type="primary">atpC</name>
    <name type="ordered locus">XCC0555</name>
</gene>
<dbReference type="EMBL" id="AE008922">
    <property type="protein sequence ID" value="AAM39871.1"/>
    <property type="molecule type" value="Genomic_DNA"/>
</dbReference>
<dbReference type="RefSeq" id="NP_635947.1">
    <property type="nucleotide sequence ID" value="NC_003902.1"/>
</dbReference>
<dbReference type="RefSeq" id="WP_011035802.1">
    <property type="nucleotide sequence ID" value="NC_003902.1"/>
</dbReference>
<dbReference type="SMR" id="Q8PCZ4"/>
<dbReference type="STRING" id="190485.XCC0555"/>
<dbReference type="EnsemblBacteria" id="AAM39871">
    <property type="protein sequence ID" value="AAM39871"/>
    <property type="gene ID" value="XCC0555"/>
</dbReference>
<dbReference type="KEGG" id="xcc:XCC0555"/>
<dbReference type="PATRIC" id="fig|190485.4.peg.612"/>
<dbReference type="eggNOG" id="COG0355">
    <property type="taxonomic scope" value="Bacteria"/>
</dbReference>
<dbReference type="HOGENOM" id="CLU_084338_2_0_6"/>
<dbReference type="OrthoDB" id="9791445at2"/>
<dbReference type="Proteomes" id="UP000001010">
    <property type="component" value="Chromosome"/>
</dbReference>
<dbReference type="GO" id="GO:0005886">
    <property type="term" value="C:plasma membrane"/>
    <property type="evidence" value="ECO:0007669"/>
    <property type="project" value="UniProtKB-SubCell"/>
</dbReference>
<dbReference type="GO" id="GO:0045259">
    <property type="term" value="C:proton-transporting ATP synthase complex"/>
    <property type="evidence" value="ECO:0007669"/>
    <property type="project" value="UniProtKB-KW"/>
</dbReference>
<dbReference type="GO" id="GO:0005524">
    <property type="term" value="F:ATP binding"/>
    <property type="evidence" value="ECO:0007669"/>
    <property type="project" value="UniProtKB-UniRule"/>
</dbReference>
<dbReference type="GO" id="GO:0046933">
    <property type="term" value="F:proton-transporting ATP synthase activity, rotational mechanism"/>
    <property type="evidence" value="ECO:0007669"/>
    <property type="project" value="UniProtKB-UniRule"/>
</dbReference>
<dbReference type="GO" id="GO:0015986">
    <property type="term" value="P:proton motive force-driven ATP synthesis"/>
    <property type="evidence" value="ECO:0000318"/>
    <property type="project" value="GO_Central"/>
</dbReference>
<dbReference type="CDD" id="cd12152">
    <property type="entry name" value="F1-ATPase_delta"/>
    <property type="match status" value="1"/>
</dbReference>
<dbReference type="FunFam" id="2.60.15.10:FF:000001">
    <property type="entry name" value="ATP synthase epsilon chain"/>
    <property type="match status" value="1"/>
</dbReference>
<dbReference type="Gene3D" id="1.20.5.440">
    <property type="entry name" value="ATP synthase delta/epsilon subunit, C-terminal domain"/>
    <property type="match status" value="1"/>
</dbReference>
<dbReference type="Gene3D" id="2.60.15.10">
    <property type="entry name" value="F0F1 ATP synthase delta/epsilon subunit, N-terminal"/>
    <property type="match status" value="1"/>
</dbReference>
<dbReference type="HAMAP" id="MF_00530">
    <property type="entry name" value="ATP_synth_epsil_bac"/>
    <property type="match status" value="1"/>
</dbReference>
<dbReference type="InterPro" id="IPR036794">
    <property type="entry name" value="ATP_F1_dsu/esu_C_sf"/>
</dbReference>
<dbReference type="InterPro" id="IPR001469">
    <property type="entry name" value="ATP_synth_F1_dsu/esu"/>
</dbReference>
<dbReference type="InterPro" id="IPR020546">
    <property type="entry name" value="ATP_synth_F1_dsu/esu_N"/>
</dbReference>
<dbReference type="InterPro" id="IPR020547">
    <property type="entry name" value="ATP_synth_F1_esu_C"/>
</dbReference>
<dbReference type="InterPro" id="IPR036771">
    <property type="entry name" value="ATPsynth_dsu/esu_N"/>
</dbReference>
<dbReference type="NCBIfam" id="TIGR01216">
    <property type="entry name" value="ATP_synt_epsi"/>
    <property type="match status" value="1"/>
</dbReference>
<dbReference type="NCBIfam" id="NF001847">
    <property type="entry name" value="PRK00571.1-4"/>
    <property type="match status" value="1"/>
</dbReference>
<dbReference type="PANTHER" id="PTHR13822">
    <property type="entry name" value="ATP SYNTHASE DELTA/EPSILON CHAIN"/>
    <property type="match status" value="1"/>
</dbReference>
<dbReference type="PANTHER" id="PTHR13822:SF10">
    <property type="entry name" value="ATP SYNTHASE EPSILON CHAIN, CHLOROPLASTIC"/>
    <property type="match status" value="1"/>
</dbReference>
<dbReference type="Pfam" id="PF00401">
    <property type="entry name" value="ATP-synt_DE"/>
    <property type="match status" value="1"/>
</dbReference>
<dbReference type="Pfam" id="PF02823">
    <property type="entry name" value="ATP-synt_DE_N"/>
    <property type="match status" value="1"/>
</dbReference>
<dbReference type="SUPFAM" id="SSF46604">
    <property type="entry name" value="Epsilon subunit of F1F0-ATP synthase C-terminal domain"/>
    <property type="match status" value="1"/>
</dbReference>
<dbReference type="SUPFAM" id="SSF51344">
    <property type="entry name" value="Epsilon subunit of F1F0-ATP synthase N-terminal domain"/>
    <property type="match status" value="1"/>
</dbReference>
<feature type="chain" id="PRO_0000188243" description="ATP synthase epsilon chain">
    <location>
        <begin position="1"/>
        <end position="140"/>
    </location>
</feature>
<protein>
    <recommendedName>
        <fullName evidence="1">ATP synthase epsilon chain</fullName>
    </recommendedName>
    <alternativeName>
        <fullName evidence="1">ATP synthase F1 sector epsilon subunit</fullName>
    </alternativeName>
    <alternativeName>
        <fullName evidence="1">F-ATPase epsilon subunit</fullName>
    </alternativeName>
</protein>
<accession>Q8PCZ4</accession>
<comment type="function">
    <text evidence="1">Produces ATP from ADP in the presence of a proton gradient across the membrane.</text>
</comment>
<comment type="subunit">
    <text>F-type ATPases have 2 components, CF(1) - the catalytic core - and CF(0) - the membrane proton channel. CF(1) has five subunits: alpha(3), beta(3), gamma(1), delta(1), epsilon(1). CF(0) has three main subunits: a, b and c.</text>
</comment>
<comment type="subcellular location">
    <subcellularLocation>
        <location evidence="1">Cell inner membrane</location>
        <topology evidence="1">Peripheral membrane protein</topology>
    </subcellularLocation>
</comment>
<comment type="similarity">
    <text evidence="1">Belongs to the ATPase epsilon chain family.</text>
</comment>
<reference key="1">
    <citation type="journal article" date="2002" name="Nature">
        <title>Comparison of the genomes of two Xanthomonas pathogens with differing host specificities.</title>
        <authorList>
            <person name="da Silva A.C.R."/>
            <person name="Ferro J.A."/>
            <person name="Reinach F.C."/>
            <person name="Farah C.S."/>
            <person name="Furlan L.R."/>
            <person name="Quaggio R.B."/>
            <person name="Monteiro-Vitorello C.B."/>
            <person name="Van Sluys M.A."/>
            <person name="Almeida N.F. Jr."/>
            <person name="Alves L.M.C."/>
            <person name="do Amaral A.M."/>
            <person name="Bertolini M.C."/>
            <person name="Camargo L.E.A."/>
            <person name="Camarotte G."/>
            <person name="Cannavan F."/>
            <person name="Cardozo J."/>
            <person name="Chambergo F."/>
            <person name="Ciapina L.P."/>
            <person name="Cicarelli R.M.B."/>
            <person name="Coutinho L.L."/>
            <person name="Cursino-Santos J.R."/>
            <person name="El-Dorry H."/>
            <person name="Faria J.B."/>
            <person name="Ferreira A.J.S."/>
            <person name="Ferreira R.C.C."/>
            <person name="Ferro M.I.T."/>
            <person name="Formighieri E.F."/>
            <person name="Franco M.C."/>
            <person name="Greggio C.C."/>
            <person name="Gruber A."/>
            <person name="Katsuyama A.M."/>
            <person name="Kishi L.T."/>
            <person name="Leite R.P."/>
            <person name="Lemos E.G.M."/>
            <person name="Lemos M.V.F."/>
            <person name="Locali E.C."/>
            <person name="Machado M.A."/>
            <person name="Madeira A.M.B.N."/>
            <person name="Martinez-Rossi N.M."/>
            <person name="Martins E.C."/>
            <person name="Meidanis J."/>
            <person name="Menck C.F.M."/>
            <person name="Miyaki C.Y."/>
            <person name="Moon D.H."/>
            <person name="Moreira L.M."/>
            <person name="Novo M.T.M."/>
            <person name="Okura V.K."/>
            <person name="Oliveira M.C."/>
            <person name="Oliveira V.R."/>
            <person name="Pereira H.A."/>
            <person name="Rossi A."/>
            <person name="Sena J.A.D."/>
            <person name="Silva C."/>
            <person name="de Souza R.F."/>
            <person name="Spinola L.A.F."/>
            <person name="Takita M.A."/>
            <person name="Tamura R.E."/>
            <person name="Teixeira E.C."/>
            <person name="Tezza R.I.D."/>
            <person name="Trindade dos Santos M."/>
            <person name="Truffi D."/>
            <person name="Tsai S.M."/>
            <person name="White F.F."/>
            <person name="Setubal J.C."/>
            <person name="Kitajima J.P."/>
        </authorList>
    </citation>
    <scope>NUCLEOTIDE SEQUENCE [LARGE SCALE GENOMIC DNA]</scope>
    <source>
        <strain>ATCC 33913 / DSM 3586 / NCPPB 528 / LMG 568 / P 25</strain>
    </source>
</reference>
<sequence>MSTIRCDIVSAEQEIFRGEATLVVATGELGELGIAPKHAPLITRLKPGKVVVTTASGEQLDFAISGGILEVQPQVVTVLVDTAIRAQDIDEAAVRKAKEEAERLLANRGDTVDVEQAQRQLAEATVQLQALERLRRTLKH</sequence>
<name>ATPE_XANCP</name>
<organism>
    <name type="scientific">Xanthomonas campestris pv. campestris (strain ATCC 33913 / DSM 3586 / NCPPB 528 / LMG 568 / P 25)</name>
    <dbReference type="NCBI Taxonomy" id="190485"/>
    <lineage>
        <taxon>Bacteria</taxon>
        <taxon>Pseudomonadati</taxon>
        <taxon>Pseudomonadota</taxon>
        <taxon>Gammaproteobacteria</taxon>
        <taxon>Lysobacterales</taxon>
        <taxon>Lysobacteraceae</taxon>
        <taxon>Xanthomonas</taxon>
    </lineage>
</organism>
<proteinExistence type="inferred from homology"/>
<keyword id="KW-0066">ATP synthesis</keyword>
<keyword id="KW-0997">Cell inner membrane</keyword>
<keyword id="KW-1003">Cell membrane</keyword>
<keyword id="KW-0139">CF(1)</keyword>
<keyword id="KW-0375">Hydrogen ion transport</keyword>
<keyword id="KW-0406">Ion transport</keyword>
<keyword id="KW-0472">Membrane</keyword>
<keyword id="KW-1185">Reference proteome</keyword>
<keyword id="KW-0813">Transport</keyword>